<name>KPYK1_SALTI</name>
<protein>
    <recommendedName>
        <fullName>Pyruvate kinase I</fullName>
        <ecNumber>2.7.1.40</ecNumber>
    </recommendedName>
    <alternativeName>
        <fullName>PK-1</fullName>
    </alternativeName>
</protein>
<reference key="1">
    <citation type="journal article" date="2001" name="Nature">
        <title>Complete genome sequence of a multiple drug resistant Salmonella enterica serovar Typhi CT18.</title>
        <authorList>
            <person name="Parkhill J."/>
            <person name="Dougan G."/>
            <person name="James K.D."/>
            <person name="Thomson N.R."/>
            <person name="Pickard D."/>
            <person name="Wain J."/>
            <person name="Churcher C.M."/>
            <person name="Mungall K.L."/>
            <person name="Bentley S.D."/>
            <person name="Holden M.T.G."/>
            <person name="Sebaihia M."/>
            <person name="Baker S."/>
            <person name="Basham D."/>
            <person name="Brooks K."/>
            <person name="Chillingworth T."/>
            <person name="Connerton P."/>
            <person name="Cronin A."/>
            <person name="Davis P."/>
            <person name="Davies R.M."/>
            <person name="Dowd L."/>
            <person name="White N."/>
            <person name="Farrar J."/>
            <person name="Feltwell T."/>
            <person name="Hamlin N."/>
            <person name="Haque A."/>
            <person name="Hien T.T."/>
            <person name="Holroyd S."/>
            <person name="Jagels K."/>
            <person name="Krogh A."/>
            <person name="Larsen T.S."/>
            <person name="Leather S."/>
            <person name="Moule S."/>
            <person name="O'Gaora P."/>
            <person name="Parry C."/>
            <person name="Quail M.A."/>
            <person name="Rutherford K.M."/>
            <person name="Simmonds M."/>
            <person name="Skelton J."/>
            <person name="Stevens K."/>
            <person name="Whitehead S."/>
            <person name="Barrell B.G."/>
        </authorList>
    </citation>
    <scope>NUCLEOTIDE SEQUENCE [LARGE SCALE GENOMIC DNA]</scope>
    <source>
        <strain>CT18</strain>
    </source>
</reference>
<reference key="2">
    <citation type="journal article" date="2003" name="J. Bacteriol.">
        <title>Comparative genomics of Salmonella enterica serovar Typhi strains Ty2 and CT18.</title>
        <authorList>
            <person name="Deng W."/>
            <person name="Liou S.-R."/>
            <person name="Plunkett G. III"/>
            <person name="Mayhew G.F."/>
            <person name="Rose D.J."/>
            <person name="Burland V."/>
            <person name="Kodoyianni V."/>
            <person name="Schwartz D.C."/>
            <person name="Blattner F.R."/>
        </authorList>
    </citation>
    <scope>NUCLEOTIDE SEQUENCE [LARGE SCALE GENOMIC DNA]</scope>
    <source>
        <strain>ATCC 700931 / Ty2</strain>
    </source>
</reference>
<accession>Q8Z6K2</accession>
<dbReference type="EC" id="2.7.1.40"/>
<dbReference type="EMBL" id="AL513382">
    <property type="protein sequence ID" value="CAD01987.1"/>
    <property type="molecule type" value="Genomic_DNA"/>
</dbReference>
<dbReference type="EMBL" id="AE014613">
    <property type="protein sequence ID" value="AAO68900.1"/>
    <property type="molecule type" value="Genomic_DNA"/>
</dbReference>
<dbReference type="RefSeq" id="NP_456147.1">
    <property type="nucleotide sequence ID" value="NC_003198.1"/>
</dbReference>
<dbReference type="SMR" id="Q8Z6K2"/>
<dbReference type="STRING" id="220341.gene:17585679"/>
<dbReference type="KEGG" id="stt:t1246"/>
<dbReference type="KEGG" id="sty:STY1744"/>
<dbReference type="PATRIC" id="fig|220341.7.peg.1755"/>
<dbReference type="eggNOG" id="COG0469">
    <property type="taxonomic scope" value="Bacteria"/>
</dbReference>
<dbReference type="HOGENOM" id="CLU_015439_0_0_6"/>
<dbReference type="OMA" id="HQGRYDR"/>
<dbReference type="UniPathway" id="UPA00109">
    <property type="reaction ID" value="UER00188"/>
</dbReference>
<dbReference type="Proteomes" id="UP000000541">
    <property type="component" value="Chromosome"/>
</dbReference>
<dbReference type="Proteomes" id="UP000002670">
    <property type="component" value="Chromosome"/>
</dbReference>
<dbReference type="GO" id="GO:0005524">
    <property type="term" value="F:ATP binding"/>
    <property type="evidence" value="ECO:0007669"/>
    <property type="project" value="UniProtKB-KW"/>
</dbReference>
<dbReference type="GO" id="GO:0016301">
    <property type="term" value="F:kinase activity"/>
    <property type="evidence" value="ECO:0007669"/>
    <property type="project" value="UniProtKB-KW"/>
</dbReference>
<dbReference type="GO" id="GO:0000287">
    <property type="term" value="F:magnesium ion binding"/>
    <property type="evidence" value="ECO:0007669"/>
    <property type="project" value="InterPro"/>
</dbReference>
<dbReference type="GO" id="GO:0030955">
    <property type="term" value="F:potassium ion binding"/>
    <property type="evidence" value="ECO:0007669"/>
    <property type="project" value="InterPro"/>
</dbReference>
<dbReference type="GO" id="GO:0004743">
    <property type="term" value="F:pyruvate kinase activity"/>
    <property type="evidence" value="ECO:0007669"/>
    <property type="project" value="UniProtKB-EC"/>
</dbReference>
<dbReference type="CDD" id="cd00288">
    <property type="entry name" value="Pyruvate_Kinase"/>
    <property type="match status" value="1"/>
</dbReference>
<dbReference type="FunFam" id="2.40.33.10:FF:000001">
    <property type="entry name" value="Pyruvate kinase"/>
    <property type="match status" value="1"/>
</dbReference>
<dbReference type="FunFam" id="3.20.20.60:FF:000001">
    <property type="entry name" value="Pyruvate kinase"/>
    <property type="match status" value="1"/>
</dbReference>
<dbReference type="FunFam" id="3.40.1380.20:FF:000003">
    <property type="entry name" value="Pyruvate kinase"/>
    <property type="match status" value="1"/>
</dbReference>
<dbReference type="Gene3D" id="3.20.20.60">
    <property type="entry name" value="Phosphoenolpyruvate-binding domains"/>
    <property type="match status" value="1"/>
</dbReference>
<dbReference type="Gene3D" id="2.40.33.10">
    <property type="entry name" value="PK beta-barrel domain-like"/>
    <property type="match status" value="1"/>
</dbReference>
<dbReference type="Gene3D" id="3.40.1380.20">
    <property type="entry name" value="Pyruvate kinase, C-terminal domain"/>
    <property type="match status" value="1"/>
</dbReference>
<dbReference type="InterPro" id="IPR001697">
    <property type="entry name" value="Pyr_Knase"/>
</dbReference>
<dbReference type="InterPro" id="IPR015813">
    <property type="entry name" value="Pyrv/PenolPyrv_kinase-like_dom"/>
</dbReference>
<dbReference type="InterPro" id="IPR040442">
    <property type="entry name" value="Pyrv_kinase-like_dom_sf"/>
</dbReference>
<dbReference type="InterPro" id="IPR011037">
    <property type="entry name" value="Pyrv_Knase-like_insert_dom_sf"/>
</dbReference>
<dbReference type="InterPro" id="IPR018209">
    <property type="entry name" value="Pyrv_Knase_AS"/>
</dbReference>
<dbReference type="InterPro" id="IPR015793">
    <property type="entry name" value="Pyrv_Knase_brl"/>
</dbReference>
<dbReference type="InterPro" id="IPR015795">
    <property type="entry name" value="Pyrv_Knase_C"/>
</dbReference>
<dbReference type="InterPro" id="IPR036918">
    <property type="entry name" value="Pyrv_Knase_C_sf"/>
</dbReference>
<dbReference type="InterPro" id="IPR015806">
    <property type="entry name" value="Pyrv_Knase_insert_dom_sf"/>
</dbReference>
<dbReference type="NCBIfam" id="NF004491">
    <property type="entry name" value="PRK05826.1"/>
    <property type="match status" value="1"/>
</dbReference>
<dbReference type="NCBIfam" id="NF004978">
    <property type="entry name" value="PRK06354.1"/>
    <property type="match status" value="1"/>
</dbReference>
<dbReference type="NCBIfam" id="NF006664">
    <property type="entry name" value="PRK09206.1"/>
    <property type="match status" value="1"/>
</dbReference>
<dbReference type="NCBIfam" id="TIGR01064">
    <property type="entry name" value="pyruv_kin"/>
    <property type="match status" value="1"/>
</dbReference>
<dbReference type="PANTHER" id="PTHR11817">
    <property type="entry name" value="PYRUVATE KINASE"/>
    <property type="match status" value="1"/>
</dbReference>
<dbReference type="Pfam" id="PF00224">
    <property type="entry name" value="PK"/>
    <property type="match status" value="1"/>
</dbReference>
<dbReference type="Pfam" id="PF02887">
    <property type="entry name" value="PK_C"/>
    <property type="match status" value="1"/>
</dbReference>
<dbReference type="PRINTS" id="PR01050">
    <property type="entry name" value="PYRUVTKNASE"/>
</dbReference>
<dbReference type="SUPFAM" id="SSF51621">
    <property type="entry name" value="Phosphoenolpyruvate/pyruvate domain"/>
    <property type="match status" value="1"/>
</dbReference>
<dbReference type="SUPFAM" id="SSF50800">
    <property type="entry name" value="PK beta-barrel domain-like"/>
    <property type="match status" value="1"/>
</dbReference>
<dbReference type="SUPFAM" id="SSF52935">
    <property type="entry name" value="PK C-terminal domain-like"/>
    <property type="match status" value="1"/>
</dbReference>
<dbReference type="PROSITE" id="PS00110">
    <property type="entry name" value="PYRUVATE_KINASE"/>
    <property type="match status" value="1"/>
</dbReference>
<sequence>MKKTKIVCTIGPKTESEEMLSKMLDAGMNVMRLNFSHGDYAEHGQRIQNLRNVMSKTGKKAAILLDTKGPEIRTIKLEGGNDVSLKAGQTFTFTTDKSVVGNNEIVAVTYEGFTSDLSVGNTVLVDDGLIGMEVTAIEGNKVICKVLNNGDLGENKGVNLPGVSIALPALAEKDKQDLIFGCEQGVDFVAASFIRKRSDVVEIREHLKAHGGENIQIISKIENQEGLNNFDEILEASDGIMVARGDLGVEIPVEEVIFAQKMMIEKCIRARKVVITATQMLDSMIKNPRPTRAEAGDVANAILDGTDAVMLSGESAKGKYPLEAVSIMATICERTDRVMNSRLDYNNDSRKLRITEAVCRGAVETAEKLKAPLIVVATQGGKSARAVRKYFPDATILALTTNEVTARQLVLSKGVVSQLVKEINSTDDFYRLGKDVALQSGLAQKGDVVVMVSGALVPSGTTNTASVHVL</sequence>
<comment type="catalytic activity">
    <reaction>
        <text>pyruvate + ATP = phosphoenolpyruvate + ADP + H(+)</text>
        <dbReference type="Rhea" id="RHEA:18157"/>
        <dbReference type="ChEBI" id="CHEBI:15361"/>
        <dbReference type="ChEBI" id="CHEBI:15378"/>
        <dbReference type="ChEBI" id="CHEBI:30616"/>
        <dbReference type="ChEBI" id="CHEBI:58702"/>
        <dbReference type="ChEBI" id="CHEBI:456216"/>
        <dbReference type="EC" id="2.7.1.40"/>
    </reaction>
</comment>
<comment type="cofactor">
    <cofactor evidence="1">
        <name>Mg(2+)</name>
        <dbReference type="ChEBI" id="CHEBI:18420"/>
    </cofactor>
</comment>
<comment type="cofactor">
    <cofactor evidence="1">
        <name>K(+)</name>
        <dbReference type="ChEBI" id="CHEBI:29103"/>
    </cofactor>
</comment>
<comment type="pathway">
    <text>Carbohydrate degradation; glycolysis; pyruvate from D-glyceraldehyde 3-phosphate: step 5/5.</text>
</comment>
<comment type="subunit">
    <text evidence="1">Homotetramer.</text>
</comment>
<comment type="similarity">
    <text evidence="3">Belongs to the pyruvate kinase family.</text>
</comment>
<evidence type="ECO:0000250" key="1"/>
<evidence type="ECO:0000250" key="2">
    <source>
        <dbReference type="UniProtKB" id="P14618"/>
    </source>
</evidence>
<evidence type="ECO:0000305" key="3"/>
<keyword id="KW-0067">ATP-binding</keyword>
<keyword id="KW-0324">Glycolysis</keyword>
<keyword id="KW-0418">Kinase</keyword>
<keyword id="KW-0460">Magnesium</keyword>
<keyword id="KW-0479">Metal-binding</keyword>
<keyword id="KW-0547">Nucleotide-binding</keyword>
<keyword id="KW-0630">Potassium</keyword>
<keyword id="KW-0670">Pyruvate</keyword>
<keyword id="KW-0808">Transferase</keyword>
<gene>
    <name type="primary">pykF</name>
    <name type="ordered locus">STY1744</name>
    <name type="ordered locus">t1246</name>
</gene>
<proteinExistence type="inferred from homology"/>
<organism>
    <name type="scientific">Salmonella typhi</name>
    <dbReference type="NCBI Taxonomy" id="90370"/>
    <lineage>
        <taxon>Bacteria</taxon>
        <taxon>Pseudomonadati</taxon>
        <taxon>Pseudomonadota</taxon>
        <taxon>Gammaproteobacteria</taxon>
        <taxon>Enterobacterales</taxon>
        <taxon>Enterobacteriaceae</taxon>
        <taxon>Salmonella</taxon>
    </lineage>
</organism>
<feature type="chain" id="PRO_0000112071" description="Pyruvate kinase I">
    <location>
        <begin position="1"/>
        <end position="470"/>
    </location>
</feature>
<feature type="binding site" evidence="1">
    <location>
        <position position="32"/>
    </location>
    <ligand>
        <name>substrate</name>
    </ligand>
</feature>
<feature type="binding site" evidence="2">
    <location>
        <begin position="34"/>
        <end position="37"/>
    </location>
    <ligand>
        <name>ATP</name>
        <dbReference type="ChEBI" id="CHEBI:30616"/>
    </ligand>
</feature>
<feature type="binding site" evidence="1">
    <location>
        <position position="34"/>
    </location>
    <ligand>
        <name>K(+)</name>
        <dbReference type="ChEBI" id="CHEBI:29103"/>
    </ligand>
</feature>
<feature type="binding site" evidence="1">
    <location>
        <position position="36"/>
    </location>
    <ligand>
        <name>K(+)</name>
        <dbReference type="ChEBI" id="CHEBI:29103"/>
    </ligand>
</feature>
<feature type="binding site" evidence="1">
    <location>
        <position position="66"/>
    </location>
    <ligand>
        <name>K(+)</name>
        <dbReference type="ChEBI" id="CHEBI:29103"/>
    </ligand>
</feature>
<feature type="binding site" evidence="1">
    <location>
        <position position="67"/>
    </location>
    <ligand>
        <name>K(+)</name>
        <dbReference type="ChEBI" id="CHEBI:29103"/>
    </ligand>
</feature>
<feature type="binding site" evidence="2">
    <location>
        <position position="73"/>
    </location>
    <ligand>
        <name>ATP</name>
        <dbReference type="ChEBI" id="CHEBI:30616"/>
    </ligand>
</feature>
<feature type="binding site" evidence="2">
    <location>
        <position position="156"/>
    </location>
    <ligand>
        <name>ATP</name>
        <dbReference type="ChEBI" id="CHEBI:30616"/>
    </ligand>
</feature>
<feature type="binding site" evidence="1">
    <location>
        <position position="222"/>
    </location>
    <ligand>
        <name>Mg(2+)</name>
        <dbReference type="ChEBI" id="CHEBI:18420"/>
    </ligand>
</feature>
<feature type="binding site" evidence="1">
    <location>
        <position position="245"/>
    </location>
    <ligand>
        <name>substrate</name>
    </ligand>
</feature>
<feature type="binding site" evidence="1">
    <location>
        <position position="246"/>
    </location>
    <ligand>
        <name>Mg(2+)</name>
        <dbReference type="ChEBI" id="CHEBI:18420"/>
    </ligand>
</feature>
<feature type="binding site" evidence="1">
    <location>
        <position position="246"/>
    </location>
    <ligand>
        <name>substrate</name>
    </ligand>
</feature>
<feature type="binding site" evidence="1">
    <location>
        <position position="278"/>
    </location>
    <ligand>
        <name>substrate</name>
    </ligand>
</feature>
<feature type="site" description="Transition state stabilizer" evidence="1">
    <location>
        <position position="220"/>
    </location>
</feature>
<feature type="sequence conflict" description="In Ref. 2; AAO68900." evidence="3" ref="2">
    <original>K</original>
    <variation>E</variation>
    <location>
        <position position="370"/>
    </location>
</feature>